<protein>
    <recommendedName>
        <fullName evidence="1">Flap endonuclease Xni</fullName>
        <shortName evidence="1">FEN</shortName>
        <ecNumber evidence="1">3.1.-.-</ecNumber>
    </recommendedName>
</protein>
<accession>A3D2C6</accession>
<keyword id="KW-0238">DNA-binding</keyword>
<keyword id="KW-0255">Endonuclease</keyword>
<keyword id="KW-0378">Hydrolase</keyword>
<keyword id="KW-0460">Magnesium</keyword>
<keyword id="KW-0479">Metal-binding</keyword>
<keyword id="KW-0540">Nuclease</keyword>
<keyword id="KW-0630">Potassium</keyword>
<keyword id="KW-1185">Reference proteome</keyword>
<comment type="function">
    <text evidence="1">Has flap endonuclease activity. During DNA replication, flap endonucleases cleave the 5'-overhanging flap structure that is generated by displacement synthesis when DNA polymerase encounters the 5'-end of a downstream Okazaki fragment.</text>
</comment>
<comment type="cofactor">
    <cofactor evidence="1">
        <name>Mg(2+)</name>
        <dbReference type="ChEBI" id="CHEBI:18420"/>
    </cofactor>
    <text evidence="1">Binds 2 Mg(2+) per subunit. Only one magnesium ion has a direct interaction with the protein, the other interactions are indirect.</text>
</comment>
<comment type="cofactor">
    <cofactor evidence="1">
        <name>K(+)</name>
        <dbReference type="ChEBI" id="CHEBI:29103"/>
    </cofactor>
    <text evidence="1">Binds 1 K(+) per subunit. The potassium ion strongly increases the affinity for DNA.</text>
</comment>
<comment type="similarity">
    <text evidence="1">Belongs to the Xni family.</text>
</comment>
<feature type="chain" id="PRO_1000065883" description="Flap endonuclease Xni">
    <location>
        <begin position="1"/>
        <end position="262"/>
    </location>
</feature>
<feature type="domain" description="5'-3' exonuclease" evidence="1">
    <location>
        <begin position="162"/>
        <end position="257"/>
    </location>
</feature>
<feature type="region of interest" description="Interaction with DNA" evidence="1">
    <location>
        <begin position="185"/>
        <end position="190"/>
    </location>
</feature>
<feature type="binding site" evidence="1">
    <location>
        <position position="105"/>
    </location>
    <ligand>
        <name>Mg(2+)</name>
        <dbReference type="ChEBI" id="CHEBI:18420"/>
    </ligand>
</feature>
<feature type="binding site" evidence="1">
    <location>
        <position position="172"/>
    </location>
    <ligand>
        <name>K(+)</name>
        <dbReference type="ChEBI" id="CHEBI:29103"/>
    </ligand>
</feature>
<feature type="binding site" evidence="1">
    <location>
        <position position="173"/>
    </location>
    <ligand>
        <name>K(+)</name>
        <dbReference type="ChEBI" id="CHEBI:29103"/>
    </ligand>
</feature>
<feature type="binding site" evidence="1">
    <location>
        <position position="181"/>
    </location>
    <ligand>
        <name>K(+)</name>
        <dbReference type="ChEBI" id="CHEBI:29103"/>
    </ligand>
</feature>
<feature type="binding site" evidence="1">
    <location>
        <position position="183"/>
    </location>
    <ligand>
        <name>K(+)</name>
        <dbReference type="ChEBI" id="CHEBI:29103"/>
    </ligand>
</feature>
<feature type="binding site" evidence="1">
    <location>
        <position position="186"/>
    </location>
    <ligand>
        <name>K(+)</name>
        <dbReference type="ChEBI" id="CHEBI:29103"/>
    </ligand>
</feature>
<organism>
    <name type="scientific">Shewanella baltica (strain OS155 / ATCC BAA-1091)</name>
    <dbReference type="NCBI Taxonomy" id="325240"/>
    <lineage>
        <taxon>Bacteria</taxon>
        <taxon>Pseudomonadati</taxon>
        <taxon>Pseudomonadota</taxon>
        <taxon>Gammaproteobacteria</taxon>
        <taxon>Alteromonadales</taxon>
        <taxon>Shewanellaceae</taxon>
        <taxon>Shewanella</taxon>
    </lineage>
</organism>
<dbReference type="EC" id="3.1.-.-" evidence="1"/>
<dbReference type="EMBL" id="CP000563">
    <property type="protein sequence ID" value="ABN60889.1"/>
    <property type="molecule type" value="Genomic_DNA"/>
</dbReference>
<dbReference type="RefSeq" id="WP_011846287.1">
    <property type="nucleotide sequence ID" value="NC_009052.1"/>
</dbReference>
<dbReference type="SMR" id="A3D2C6"/>
<dbReference type="STRING" id="325240.Sbal_1371"/>
<dbReference type="KEGG" id="sbl:Sbal_1371"/>
<dbReference type="HOGENOM" id="CLU_004675_1_2_6"/>
<dbReference type="OrthoDB" id="8070997at2"/>
<dbReference type="Proteomes" id="UP000001557">
    <property type="component" value="Chromosome"/>
</dbReference>
<dbReference type="GO" id="GO:0008409">
    <property type="term" value="F:5'-3' exonuclease activity"/>
    <property type="evidence" value="ECO:0007669"/>
    <property type="project" value="InterPro"/>
</dbReference>
<dbReference type="GO" id="GO:0017108">
    <property type="term" value="F:5'-flap endonuclease activity"/>
    <property type="evidence" value="ECO:0007669"/>
    <property type="project" value="UniProtKB-UniRule"/>
</dbReference>
<dbReference type="GO" id="GO:0003677">
    <property type="term" value="F:DNA binding"/>
    <property type="evidence" value="ECO:0007669"/>
    <property type="project" value="UniProtKB-UniRule"/>
</dbReference>
<dbReference type="GO" id="GO:0000287">
    <property type="term" value="F:magnesium ion binding"/>
    <property type="evidence" value="ECO:0007669"/>
    <property type="project" value="UniProtKB-UniRule"/>
</dbReference>
<dbReference type="GO" id="GO:0030955">
    <property type="term" value="F:potassium ion binding"/>
    <property type="evidence" value="ECO:0007669"/>
    <property type="project" value="UniProtKB-UniRule"/>
</dbReference>
<dbReference type="GO" id="GO:0033567">
    <property type="term" value="P:DNA replication, Okazaki fragment processing"/>
    <property type="evidence" value="ECO:0007669"/>
    <property type="project" value="UniProtKB-UniRule"/>
</dbReference>
<dbReference type="CDD" id="cd09898">
    <property type="entry name" value="H3TH_53EXO"/>
    <property type="match status" value="1"/>
</dbReference>
<dbReference type="CDD" id="cd09859">
    <property type="entry name" value="PIN_53EXO"/>
    <property type="match status" value="1"/>
</dbReference>
<dbReference type="FunFam" id="1.10.150.20:FF:000003">
    <property type="entry name" value="DNA polymerase I"/>
    <property type="match status" value="1"/>
</dbReference>
<dbReference type="Gene3D" id="1.10.150.20">
    <property type="entry name" value="5' to 3' exonuclease, C-terminal subdomain"/>
    <property type="match status" value="1"/>
</dbReference>
<dbReference type="Gene3D" id="3.40.50.1010">
    <property type="entry name" value="5'-nuclease"/>
    <property type="match status" value="1"/>
</dbReference>
<dbReference type="HAMAP" id="MF_01192">
    <property type="entry name" value="Xni"/>
    <property type="match status" value="1"/>
</dbReference>
<dbReference type="InterPro" id="IPR020046">
    <property type="entry name" value="5-3_exonucl_a-hlix_arch_N"/>
</dbReference>
<dbReference type="InterPro" id="IPR002421">
    <property type="entry name" value="5-3_exonuclease"/>
</dbReference>
<dbReference type="InterPro" id="IPR036279">
    <property type="entry name" value="5-3_exonuclease_C_sf"/>
</dbReference>
<dbReference type="InterPro" id="IPR020045">
    <property type="entry name" value="DNA_polI_H3TH"/>
</dbReference>
<dbReference type="InterPro" id="IPR038969">
    <property type="entry name" value="FEN"/>
</dbReference>
<dbReference type="InterPro" id="IPR008918">
    <property type="entry name" value="HhH2"/>
</dbReference>
<dbReference type="InterPro" id="IPR029060">
    <property type="entry name" value="PIN-like_dom_sf"/>
</dbReference>
<dbReference type="InterPro" id="IPR022895">
    <property type="entry name" value="Xni"/>
</dbReference>
<dbReference type="NCBIfam" id="NF007017">
    <property type="entry name" value="PRK09482.1"/>
    <property type="match status" value="1"/>
</dbReference>
<dbReference type="PANTHER" id="PTHR42646:SF2">
    <property type="entry name" value="5'-3' EXONUCLEASE FAMILY PROTEIN"/>
    <property type="match status" value="1"/>
</dbReference>
<dbReference type="PANTHER" id="PTHR42646">
    <property type="entry name" value="FLAP ENDONUCLEASE XNI"/>
    <property type="match status" value="1"/>
</dbReference>
<dbReference type="Pfam" id="PF01367">
    <property type="entry name" value="5_3_exonuc"/>
    <property type="match status" value="1"/>
</dbReference>
<dbReference type="Pfam" id="PF02739">
    <property type="entry name" value="5_3_exonuc_N"/>
    <property type="match status" value="1"/>
</dbReference>
<dbReference type="SMART" id="SM00475">
    <property type="entry name" value="53EXOc"/>
    <property type="match status" value="1"/>
</dbReference>
<dbReference type="SMART" id="SM00279">
    <property type="entry name" value="HhH2"/>
    <property type="match status" value="1"/>
</dbReference>
<dbReference type="SUPFAM" id="SSF47807">
    <property type="entry name" value="5' to 3' exonuclease, C-terminal subdomain"/>
    <property type="match status" value="1"/>
</dbReference>
<dbReference type="SUPFAM" id="SSF88723">
    <property type="entry name" value="PIN domain-like"/>
    <property type="match status" value="1"/>
</dbReference>
<evidence type="ECO:0000255" key="1">
    <source>
        <dbReference type="HAMAP-Rule" id="MF_01192"/>
    </source>
</evidence>
<name>XNI_SHEB5</name>
<sequence length="262" mass="29073">MNKFLIIDGLNLVRRIYAAIPDETDMQSLTERVISACTKLLRVHRPTHVAIVWDGHEISWRKQLYPDYKKGRKPMPEPLAQGLVALQDHLTAMHIGSIYAAAEADDVIATLAIKTAKAQGEAIIVSTDKGFSQLNHRHISQWDHFNQQYLDIAALEQKLGVERSQFLDLMALAGDSGNKIPGIAGIGPKSAAELLKTFRSLPTLFSSLSNLGAKQAKKLAEGKEMARLSYKLAQLQTDLPLNINLKDFRVIDSPPEKTINQD</sequence>
<reference key="1">
    <citation type="submission" date="2007-02" db="EMBL/GenBank/DDBJ databases">
        <title>Complete sequence of chromosome of Shewanella baltica OS155.</title>
        <authorList>
            <consortium name="US DOE Joint Genome Institute"/>
            <person name="Copeland A."/>
            <person name="Lucas S."/>
            <person name="Lapidus A."/>
            <person name="Barry K."/>
            <person name="Detter J.C."/>
            <person name="Glavina del Rio T."/>
            <person name="Hammon N."/>
            <person name="Israni S."/>
            <person name="Dalin E."/>
            <person name="Tice H."/>
            <person name="Pitluck S."/>
            <person name="Sims D.R."/>
            <person name="Brettin T."/>
            <person name="Bruce D."/>
            <person name="Han C."/>
            <person name="Tapia R."/>
            <person name="Brainard J."/>
            <person name="Schmutz J."/>
            <person name="Larimer F."/>
            <person name="Land M."/>
            <person name="Hauser L."/>
            <person name="Kyrpides N."/>
            <person name="Mikhailova N."/>
            <person name="Brettar I."/>
            <person name="Klappenbach J."/>
            <person name="Konstantinidis K."/>
            <person name="Rodrigues J."/>
            <person name="Tiedje J."/>
            <person name="Richardson P."/>
        </authorList>
    </citation>
    <scope>NUCLEOTIDE SEQUENCE [LARGE SCALE GENOMIC DNA]</scope>
    <source>
        <strain>OS155 / ATCC BAA-1091</strain>
    </source>
</reference>
<gene>
    <name evidence="1" type="primary">xni</name>
    <name evidence="1" type="synonym">ygdG</name>
    <name type="ordered locus">Sbal_1371</name>
</gene>
<proteinExistence type="inferred from homology"/>